<dbReference type="EMBL" id="CP000828">
    <property type="protein sequence ID" value="ABW25972.1"/>
    <property type="molecule type" value="Genomic_DNA"/>
</dbReference>
<dbReference type="SMR" id="B0BZP6"/>
<dbReference type="STRING" id="329726.AM1_0930"/>
<dbReference type="KEGG" id="amr:AM1_0930"/>
<dbReference type="eggNOG" id="COG0779">
    <property type="taxonomic scope" value="Bacteria"/>
</dbReference>
<dbReference type="HOGENOM" id="CLU_070525_2_1_3"/>
<dbReference type="Proteomes" id="UP000000268">
    <property type="component" value="Chromosome"/>
</dbReference>
<dbReference type="GO" id="GO:0005829">
    <property type="term" value="C:cytosol"/>
    <property type="evidence" value="ECO:0007669"/>
    <property type="project" value="TreeGrafter"/>
</dbReference>
<dbReference type="GO" id="GO:0000028">
    <property type="term" value="P:ribosomal small subunit assembly"/>
    <property type="evidence" value="ECO:0007669"/>
    <property type="project" value="TreeGrafter"/>
</dbReference>
<dbReference type="GO" id="GO:0006412">
    <property type="term" value="P:translation"/>
    <property type="evidence" value="ECO:0007669"/>
    <property type="project" value="TreeGrafter"/>
</dbReference>
<dbReference type="Gene3D" id="3.30.300.70">
    <property type="entry name" value="RimP-like superfamily, N-terminal"/>
    <property type="match status" value="1"/>
</dbReference>
<dbReference type="HAMAP" id="MF_01077">
    <property type="entry name" value="RimP"/>
    <property type="match status" value="1"/>
</dbReference>
<dbReference type="InterPro" id="IPR003728">
    <property type="entry name" value="Ribosome_maturation_RimP"/>
</dbReference>
<dbReference type="InterPro" id="IPR036847">
    <property type="entry name" value="RimP_C_sf"/>
</dbReference>
<dbReference type="InterPro" id="IPR028989">
    <property type="entry name" value="RimP_N"/>
</dbReference>
<dbReference type="InterPro" id="IPR035956">
    <property type="entry name" value="RimP_N_sf"/>
</dbReference>
<dbReference type="NCBIfam" id="NF000935">
    <property type="entry name" value="PRK00092.3-3"/>
    <property type="match status" value="1"/>
</dbReference>
<dbReference type="PANTHER" id="PTHR33867">
    <property type="entry name" value="RIBOSOME MATURATION FACTOR RIMP"/>
    <property type="match status" value="1"/>
</dbReference>
<dbReference type="PANTHER" id="PTHR33867:SF1">
    <property type="entry name" value="RIBOSOME MATURATION FACTOR RIMP"/>
    <property type="match status" value="1"/>
</dbReference>
<dbReference type="Pfam" id="PF02576">
    <property type="entry name" value="RimP_N"/>
    <property type="match status" value="1"/>
</dbReference>
<dbReference type="SUPFAM" id="SSF74942">
    <property type="entry name" value="YhbC-like, C-terminal domain"/>
    <property type="match status" value="1"/>
</dbReference>
<dbReference type="SUPFAM" id="SSF75420">
    <property type="entry name" value="YhbC-like, N-terminal domain"/>
    <property type="match status" value="1"/>
</dbReference>
<feature type="chain" id="PRO_0000384583" description="Ribosome maturation factor RimP">
    <location>
        <begin position="1"/>
        <end position="150"/>
    </location>
</feature>
<protein>
    <recommendedName>
        <fullName evidence="1">Ribosome maturation factor RimP</fullName>
    </recommendedName>
</protein>
<organism>
    <name type="scientific">Acaryochloris marina (strain MBIC 11017)</name>
    <dbReference type="NCBI Taxonomy" id="329726"/>
    <lineage>
        <taxon>Bacteria</taxon>
        <taxon>Bacillati</taxon>
        <taxon>Cyanobacteriota</taxon>
        <taxon>Cyanophyceae</taxon>
        <taxon>Acaryochloridales</taxon>
        <taxon>Acaryochloridaceae</taxon>
        <taxon>Acaryochloris</taxon>
    </lineage>
</organism>
<name>RIMP_ACAM1</name>
<keyword id="KW-0963">Cytoplasm</keyword>
<keyword id="KW-1185">Reference proteome</keyword>
<keyword id="KW-0690">Ribosome biogenesis</keyword>
<gene>
    <name evidence="1" type="primary">rimP</name>
    <name type="ordered locus">AM1_0930</name>
</gene>
<comment type="function">
    <text evidence="1">Required for maturation of 30S ribosomal subunits.</text>
</comment>
<comment type="subcellular location">
    <subcellularLocation>
        <location evidence="1">Cytoplasm</location>
    </subcellularLocation>
</comment>
<comment type="similarity">
    <text evidence="1">Belongs to the RimP family.</text>
</comment>
<reference key="1">
    <citation type="journal article" date="2008" name="Proc. Natl. Acad. Sci. U.S.A.">
        <title>Niche adaptation and genome expansion in the chlorophyll d-producing cyanobacterium Acaryochloris marina.</title>
        <authorList>
            <person name="Swingley W.D."/>
            <person name="Chen M."/>
            <person name="Cheung P.C."/>
            <person name="Conrad A.L."/>
            <person name="Dejesa L.C."/>
            <person name="Hao J."/>
            <person name="Honchak B.M."/>
            <person name="Karbach L.E."/>
            <person name="Kurdoglu A."/>
            <person name="Lahiri S."/>
            <person name="Mastrian S.D."/>
            <person name="Miyashita H."/>
            <person name="Page L."/>
            <person name="Ramakrishna P."/>
            <person name="Satoh S."/>
            <person name="Sattley W.M."/>
            <person name="Shimada Y."/>
            <person name="Taylor H.L."/>
            <person name="Tomo T."/>
            <person name="Tsuchiya T."/>
            <person name="Wang Z.T."/>
            <person name="Raymond J."/>
            <person name="Mimuro M."/>
            <person name="Blankenship R.E."/>
            <person name="Touchman J.W."/>
        </authorList>
    </citation>
    <scope>NUCLEOTIDE SEQUENCE [LARGE SCALE GENOMIC DNA]</scope>
    <source>
        <strain>MBIC 11017</strain>
    </source>
</reference>
<sequence>MIPKVIDLAAPVAAQFNLEVVGAVFQTNQSPPVLRVDIRNCDADTGLEDCEKMSRALEAVLDEDDVFPEAYVLEISSPGLSTLLTCDRDFVSFRGFPVLVQTHQPYRGHHQWIGNLTGRDEKFVQLNQKGRPIKIPREEILQVQLHDSPE</sequence>
<evidence type="ECO:0000255" key="1">
    <source>
        <dbReference type="HAMAP-Rule" id="MF_01077"/>
    </source>
</evidence>
<accession>B0BZP6</accession>
<proteinExistence type="inferred from homology"/>